<reference key="1">
    <citation type="journal article" date="1999" name="Nature">
        <title>Sequence and analysis of chromosome 2 of the plant Arabidopsis thaliana.</title>
        <authorList>
            <person name="Lin X."/>
            <person name="Kaul S."/>
            <person name="Rounsley S.D."/>
            <person name="Shea T.P."/>
            <person name="Benito M.-I."/>
            <person name="Town C.D."/>
            <person name="Fujii C.Y."/>
            <person name="Mason T.M."/>
            <person name="Bowman C.L."/>
            <person name="Barnstead M.E."/>
            <person name="Feldblyum T.V."/>
            <person name="Buell C.R."/>
            <person name="Ketchum K.A."/>
            <person name="Lee J.J."/>
            <person name="Ronning C.M."/>
            <person name="Koo H.L."/>
            <person name="Moffat K.S."/>
            <person name="Cronin L.A."/>
            <person name="Shen M."/>
            <person name="Pai G."/>
            <person name="Van Aken S."/>
            <person name="Umayam L."/>
            <person name="Tallon L.J."/>
            <person name="Gill J.E."/>
            <person name="Adams M.D."/>
            <person name="Carrera A.J."/>
            <person name="Creasy T.H."/>
            <person name="Goodman H.M."/>
            <person name="Somerville C.R."/>
            <person name="Copenhaver G.P."/>
            <person name="Preuss D."/>
            <person name="Nierman W.C."/>
            <person name="White O."/>
            <person name="Eisen J.A."/>
            <person name="Salzberg S.L."/>
            <person name="Fraser C.M."/>
            <person name="Venter J.C."/>
        </authorList>
    </citation>
    <scope>NUCLEOTIDE SEQUENCE [LARGE SCALE GENOMIC DNA]</scope>
    <source>
        <strain>cv. Columbia</strain>
    </source>
</reference>
<reference key="2">
    <citation type="journal article" date="2017" name="Plant J.">
        <title>Araport11: a complete reannotation of the Arabidopsis thaliana reference genome.</title>
        <authorList>
            <person name="Cheng C.Y."/>
            <person name="Krishnakumar V."/>
            <person name="Chan A.P."/>
            <person name="Thibaud-Nissen F."/>
            <person name="Schobel S."/>
            <person name="Town C.D."/>
        </authorList>
    </citation>
    <scope>GENOME REANNOTATION</scope>
    <source>
        <strain>cv. Columbia</strain>
    </source>
</reference>
<reference key="3">
    <citation type="journal article" date="2002" name="J. Biol. Chem.">
        <title>Functional cloning and characterization of a plant efflux carrier for multidrug and heavy metal detoxification.</title>
        <authorList>
            <person name="Li L."/>
            <person name="He Z."/>
            <person name="Pandey G.K."/>
            <person name="Tsuchiya T."/>
            <person name="Luan S."/>
        </authorList>
    </citation>
    <scope>GENE FAMILY</scope>
    <scope>NOMENCLATURE</scope>
</reference>
<reference key="4">
    <citation type="journal article" date="2003" name="Eur. J. Biochem.">
        <title>The multidrug/oligosaccharidyl-lipid/polysaccharide (MOP) exporter superfamily.</title>
        <authorList>
            <person name="Hvorup R.N."/>
            <person name="Winnen B."/>
            <person name="Chang A.B."/>
            <person name="Jiang Y."/>
            <person name="Zhou X.F."/>
            <person name="Saier M.H. Jr."/>
        </authorList>
    </citation>
    <scope>GENE FAMILY</scope>
</reference>
<name>DTX4_ARATH</name>
<accession>Q9SIA3</accession>
<gene>
    <name evidence="2" type="primary">DTX4</name>
    <name evidence="4" type="ordered locus">At2g04070</name>
    <name evidence="5" type="ORF">F3L12.10</name>
</gene>
<sequence length="476" mass="51489">MEEPFLPQDEQIVPCKATWKSGQLNVELKKVSRLAVPMATVTIAQYLLPVISVMVAGHNGELQLSGVALATSFTNVSGFSIMFGLVGSLETLSGQAYGAKQYEKMGTYTYSAISSNIPICVLISILWIYMEKLLISLGQDPDISRVAGSYALRLIPTLFAHAIVLPLTRFLLAQGLVLPLLYFALTTLLFHIAVCWTLVSALGLGSNGAALAISVSFWFFAMTLSCYVRFSSSCEKTRRFVSQDFLSSVKQFFRYGVPSAAMLCLEWWLFELLILCSGLLQNPKLETSVLSICLTTATLHYVIPVGVAAAVSTRVSNKLGAGIPQVARVSVLAGLCLWLVESSFFSILLFAFRNIIGYAFSNSKEVVDYVADLSPLLCLSFVLDGFTAVLNGVARGCGWQHIGALNNVVAYYLVGAPVGIYLAFSCELNGKGLWCGVVVGSAVQAIILAIVTASMNWKEQAKKARKRLISSENGLA</sequence>
<organism>
    <name type="scientific">Arabidopsis thaliana</name>
    <name type="common">Mouse-ear cress</name>
    <dbReference type="NCBI Taxonomy" id="3702"/>
    <lineage>
        <taxon>Eukaryota</taxon>
        <taxon>Viridiplantae</taxon>
        <taxon>Streptophyta</taxon>
        <taxon>Embryophyta</taxon>
        <taxon>Tracheophyta</taxon>
        <taxon>Spermatophyta</taxon>
        <taxon>Magnoliopsida</taxon>
        <taxon>eudicotyledons</taxon>
        <taxon>Gunneridae</taxon>
        <taxon>Pentapetalae</taxon>
        <taxon>rosids</taxon>
        <taxon>malvids</taxon>
        <taxon>Brassicales</taxon>
        <taxon>Brassicaceae</taxon>
        <taxon>Camelineae</taxon>
        <taxon>Arabidopsis</taxon>
    </lineage>
</organism>
<dbReference type="EMBL" id="AC007178">
    <property type="protein sequence ID" value="AAD28685.1"/>
    <property type="status" value="ALT_SEQ"/>
    <property type="molecule type" value="Genomic_DNA"/>
</dbReference>
<dbReference type="EMBL" id="CP002685">
    <property type="protein sequence ID" value="AEC05796.1"/>
    <property type="molecule type" value="Genomic_DNA"/>
</dbReference>
<dbReference type="PIR" id="C84454">
    <property type="entry name" value="C84454"/>
</dbReference>
<dbReference type="RefSeq" id="NP_178496.2">
    <property type="nucleotide sequence ID" value="NM_126448.3"/>
</dbReference>
<dbReference type="SMR" id="Q9SIA3"/>
<dbReference type="FunCoup" id="Q9SIA3">
    <property type="interactions" value="298"/>
</dbReference>
<dbReference type="STRING" id="3702.Q9SIA3"/>
<dbReference type="TCDB" id="2.A.66.1.56">
    <property type="family name" value="the multidrug/oligosaccharidyl-lipid/polysaccharide (mop) flippase superfamily"/>
</dbReference>
<dbReference type="PaxDb" id="3702-AT2G04070.1"/>
<dbReference type="EnsemblPlants" id="AT2G04070.1">
    <property type="protein sequence ID" value="AT2G04070.1"/>
    <property type="gene ID" value="AT2G04070"/>
</dbReference>
<dbReference type="GeneID" id="814943"/>
<dbReference type="Gramene" id="AT2G04070.1">
    <property type="protein sequence ID" value="AT2G04070.1"/>
    <property type="gene ID" value="AT2G04070"/>
</dbReference>
<dbReference type="KEGG" id="ath:AT2G04070"/>
<dbReference type="Araport" id="AT2G04070"/>
<dbReference type="TAIR" id="AT2G04070"/>
<dbReference type="eggNOG" id="KOG1347">
    <property type="taxonomic scope" value="Eukaryota"/>
</dbReference>
<dbReference type="HOGENOM" id="CLU_012893_1_4_1"/>
<dbReference type="InParanoid" id="Q9SIA3"/>
<dbReference type="OMA" id="VISSMNW"/>
<dbReference type="PRO" id="PR:Q9SIA3"/>
<dbReference type="Proteomes" id="UP000006548">
    <property type="component" value="Chromosome 2"/>
</dbReference>
<dbReference type="ExpressionAtlas" id="Q9SIA3">
    <property type="expression patterns" value="baseline and differential"/>
</dbReference>
<dbReference type="GO" id="GO:0016020">
    <property type="term" value="C:membrane"/>
    <property type="evidence" value="ECO:0007669"/>
    <property type="project" value="UniProtKB-SubCell"/>
</dbReference>
<dbReference type="GO" id="GO:0015297">
    <property type="term" value="F:antiporter activity"/>
    <property type="evidence" value="ECO:0007669"/>
    <property type="project" value="InterPro"/>
</dbReference>
<dbReference type="GO" id="GO:0042910">
    <property type="term" value="F:xenobiotic transmembrane transporter activity"/>
    <property type="evidence" value="ECO:0007669"/>
    <property type="project" value="InterPro"/>
</dbReference>
<dbReference type="GO" id="GO:1990961">
    <property type="term" value="P:xenobiotic detoxification by transmembrane export across the plasma membrane"/>
    <property type="evidence" value="ECO:0007669"/>
    <property type="project" value="InterPro"/>
</dbReference>
<dbReference type="CDD" id="cd13132">
    <property type="entry name" value="MATE_eukaryotic"/>
    <property type="match status" value="1"/>
</dbReference>
<dbReference type="InterPro" id="IPR045069">
    <property type="entry name" value="MATE_euk"/>
</dbReference>
<dbReference type="InterPro" id="IPR002528">
    <property type="entry name" value="MATE_fam"/>
</dbReference>
<dbReference type="NCBIfam" id="TIGR00797">
    <property type="entry name" value="matE"/>
    <property type="match status" value="1"/>
</dbReference>
<dbReference type="PANTHER" id="PTHR11206">
    <property type="entry name" value="MULTIDRUG RESISTANCE PROTEIN"/>
    <property type="match status" value="1"/>
</dbReference>
<dbReference type="Pfam" id="PF01554">
    <property type="entry name" value="MatE"/>
    <property type="match status" value="2"/>
</dbReference>
<keyword id="KW-0472">Membrane</keyword>
<keyword id="KW-1185">Reference proteome</keyword>
<keyword id="KW-0812">Transmembrane</keyword>
<keyword id="KW-1133">Transmembrane helix</keyword>
<keyword id="KW-0813">Transport</keyword>
<feature type="chain" id="PRO_0000405321" description="Protein DETOXIFICATION 4">
    <location>
        <begin position="1"/>
        <end position="476"/>
    </location>
</feature>
<feature type="transmembrane region" description="Helical" evidence="1">
    <location>
        <begin position="35"/>
        <end position="55"/>
    </location>
</feature>
<feature type="transmembrane region" description="Helical" evidence="1">
    <location>
        <begin position="66"/>
        <end position="86"/>
    </location>
</feature>
<feature type="transmembrane region" description="Helical" evidence="1">
    <location>
        <begin position="117"/>
        <end position="137"/>
    </location>
</feature>
<feature type="transmembrane region" description="Helical" evidence="1">
    <location>
        <begin position="154"/>
        <end position="174"/>
    </location>
</feature>
<feature type="transmembrane region" description="Helical" evidence="1">
    <location>
        <begin position="176"/>
        <end position="196"/>
    </location>
</feature>
<feature type="transmembrane region" description="Helical" evidence="1">
    <location>
        <begin position="208"/>
        <end position="228"/>
    </location>
</feature>
<feature type="transmembrane region" description="Helical" evidence="1">
    <location>
        <begin position="260"/>
        <end position="280"/>
    </location>
</feature>
<feature type="transmembrane region" description="Helical" evidence="1">
    <location>
        <begin position="289"/>
        <end position="309"/>
    </location>
</feature>
<feature type="transmembrane region" description="Helical" evidence="1">
    <location>
        <begin position="332"/>
        <end position="352"/>
    </location>
</feature>
<feature type="transmembrane region" description="Helical" evidence="1">
    <location>
        <begin position="370"/>
        <end position="390"/>
    </location>
</feature>
<feature type="transmembrane region" description="Helical" evidence="1">
    <location>
        <begin position="408"/>
        <end position="428"/>
    </location>
</feature>
<feature type="transmembrane region" description="Helical" evidence="1">
    <location>
        <begin position="433"/>
        <end position="453"/>
    </location>
</feature>
<protein>
    <recommendedName>
        <fullName evidence="2">Protein DETOXIFICATION 4</fullName>
        <shortName evidence="2">AtDTX4</shortName>
    </recommendedName>
    <alternativeName>
        <fullName evidence="3">Multidrug and toxic compound extrusion protein 4</fullName>
        <shortName evidence="3">MATE protein 4</shortName>
    </alternativeName>
</protein>
<evidence type="ECO:0000255" key="1"/>
<evidence type="ECO:0000303" key="2">
    <source>
    </source>
</evidence>
<evidence type="ECO:0000305" key="3"/>
<evidence type="ECO:0000312" key="4">
    <source>
        <dbReference type="Araport" id="AT2G04070"/>
    </source>
</evidence>
<evidence type="ECO:0000312" key="5">
    <source>
        <dbReference type="EMBL" id="AAD28685.1"/>
    </source>
</evidence>
<comment type="subcellular location">
    <subcellularLocation>
        <location evidence="1">Membrane</location>
        <topology evidence="1">Multi-pass membrane protein</topology>
    </subcellularLocation>
</comment>
<comment type="similarity">
    <text evidence="3">Belongs to the multi antimicrobial extrusion (MATE) (TC 2.A.66.1) family.</text>
</comment>
<comment type="caution">
    <text evidence="3">Mistakenly referred to as AT2G04040 in PubMed:11739388.</text>
</comment>
<comment type="sequence caution" evidence="3">
    <conflict type="erroneous gene model prediction">
        <sequence resource="EMBL-CDS" id="AAD28685"/>
    </conflict>
</comment>
<proteinExistence type="inferred from homology"/>